<gene>
    <name evidence="1" type="primary">proS</name>
    <name type="ordered locus">gll2525</name>
</gene>
<comment type="function">
    <text evidence="1">Catalyzes the attachment of proline to tRNA(Pro) in a two-step reaction: proline is first activated by ATP to form Pro-AMP and then transferred to the acceptor end of tRNA(Pro). As ProRS can inadvertently accommodate and process non-cognate amino acids such as alanine and cysteine, to avoid such errors it has two additional distinct editing activities against alanine. One activity is designated as 'pretransfer' editing and involves the tRNA(Pro)-independent hydrolysis of activated Ala-AMP. The other activity is designated 'posttransfer' editing and involves deacylation of mischarged Ala-tRNA(Pro). The misacylated Cys-tRNA(Pro) is not edited by ProRS.</text>
</comment>
<comment type="catalytic activity">
    <reaction evidence="1">
        <text>tRNA(Pro) + L-proline + ATP = L-prolyl-tRNA(Pro) + AMP + diphosphate</text>
        <dbReference type="Rhea" id="RHEA:14305"/>
        <dbReference type="Rhea" id="RHEA-COMP:9700"/>
        <dbReference type="Rhea" id="RHEA-COMP:9702"/>
        <dbReference type="ChEBI" id="CHEBI:30616"/>
        <dbReference type="ChEBI" id="CHEBI:33019"/>
        <dbReference type="ChEBI" id="CHEBI:60039"/>
        <dbReference type="ChEBI" id="CHEBI:78442"/>
        <dbReference type="ChEBI" id="CHEBI:78532"/>
        <dbReference type="ChEBI" id="CHEBI:456215"/>
        <dbReference type="EC" id="6.1.1.15"/>
    </reaction>
</comment>
<comment type="subunit">
    <text evidence="1">Homodimer.</text>
</comment>
<comment type="subcellular location">
    <subcellularLocation>
        <location evidence="1">Cytoplasm</location>
    </subcellularLocation>
</comment>
<comment type="domain">
    <text evidence="1">Consists of three domains: the N-terminal catalytic domain, the editing domain and the C-terminal anticodon-binding domain.</text>
</comment>
<comment type="similarity">
    <text evidence="1">Belongs to the class-II aminoacyl-tRNA synthetase family. ProS type 1 subfamily.</text>
</comment>
<sequence>MTRLSSSFFFTLREAPAEAVAVSHKLLLRAGFIRPLAGTAGLYAYGPLMQRVLQKVGRIVREEMDATGAQEALFCQLQPAEIWKESGRWTVYTQDGTMFTLKDGQGEQAREYGLGPTHEEAVCDFVRASLNSYKQLPFHLYQVQTKFRNEKRPRFGLMRGREFIMKDGYSFHATPESLDETYRAMYRAYTNMFRRCGLDFRAVEADSGAIGGSGSHEFMALCDIGEDTILYCDAAGYAANVEKAVSLVSDPEAIGPGSYAVKSTPGIRTVEQQAAMLGVPISRIVKNIVYVALYAEADPRPVLVSIRGDRHINETKLKNRLDCLDVRLADEAELAAWVEVKPGFVGPDAPIAGVIRLADRSVDGLTDFSTGCNQDDVQCVWANWGENGLVLPEVADLDTAQAGDHCHLAPEATLQSARGVELGHIFKLGTKYSRPMQVLFADEAGELQPALMGCYGVGVSRLPAAVVEQSHDNDGILWPIAIAPYQVVLVPANVAVEAQRQAAEELYRSLTAAGIDTLLDDRPERAGVKFKDADLIGIPLRVTLGRDLEAGLVEIKVRGGGAAEKVPLAEALAQIKGLIERLNSAQHSR</sequence>
<evidence type="ECO:0000255" key="1">
    <source>
        <dbReference type="HAMAP-Rule" id="MF_01569"/>
    </source>
</evidence>
<dbReference type="EC" id="6.1.1.15" evidence="1"/>
<dbReference type="EMBL" id="BA000045">
    <property type="protein sequence ID" value="BAC90466.1"/>
    <property type="molecule type" value="Genomic_DNA"/>
</dbReference>
<dbReference type="RefSeq" id="NP_925471.1">
    <property type="nucleotide sequence ID" value="NC_005125.1"/>
</dbReference>
<dbReference type="RefSeq" id="WP_011142520.1">
    <property type="nucleotide sequence ID" value="NC_005125.1"/>
</dbReference>
<dbReference type="SMR" id="Q7NHL0"/>
<dbReference type="FunCoup" id="Q7NHL0">
    <property type="interactions" value="215"/>
</dbReference>
<dbReference type="STRING" id="251221.gene:10760025"/>
<dbReference type="EnsemblBacteria" id="BAC90466">
    <property type="protein sequence ID" value="BAC90466"/>
    <property type="gene ID" value="BAC90466"/>
</dbReference>
<dbReference type="KEGG" id="gvi:gll2525"/>
<dbReference type="PATRIC" id="fig|251221.4.peg.2564"/>
<dbReference type="eggNOG" id="COG0442">
    <property type="taxonomic scope" value="Bacteria"/>
</dbReference>
<dbReference type="HOGENOM" id="CLU_016739_0_0_3"/>
<dbReference type="InParanoid" id="Q7NHL0"/>
<dbReference type="OrthoDB" id="9809052at2"/>
<dbReference type="PhylomeDB" id="Q7NHL0"/>
<dbReference type="Proteomes" id="UP000000557">
    <property type="component" value="Chromosome"/>
</dbReference>
<dbReference type="GO" id="GO:0005829">
    <property type="term" value="C:cytosol"/>
    <property type="evidence" value="ECO:0000318"/>
    <property type="project" value="GO_Central"/>
</dbReference>
<dbReference type="GO" id="GO:0002161">
    <property type="term" value="F:aminoacyl-tRNA deacylase activity"/>
    <property type="evidence" value="ECO:0007669"/>
    <property type="project" value="InterPro"/>
</dbReference>
<dbReference type="GO" id="GO:0005524">
    <property type="term" value="F:ATP binding"/>
    <property type="evidence" value="ECO:0007669"/>
    <property type="project" value="UniProtKB-UniRule"/>
</dbReference>
<dbReference type="GO" id="GO:0004827">
    <property type="term" value="F:proline-tRNA ligase activity"/>
    <property type="evidence" value="ECO:0000318"/>
    <property type="project" value="GO_Central"/>
</dbReference>
<dbReference type="GO" id="GO:0006433">
    <property type="term" value="P:prolyl-tRNA aminoacylation"/>
    <property type="evidence" value="ECO:0000318"/>
    <property type="project" value="GO_Central"/>
</dbReference>
<dbReference type="CDD" id="cd04334">
    <property type="entry name" value="ProRS-INS"/>
    <property type="match status" value="1"/>
</dbReference>
<dbReference type="CDD" id="cd00861">
    <property type="entry name" value="ProRS_anticodon_short"/>
    <property type="match status" value="1"/>
</dbReference>
<dbReference type="CDD" id="cd00779">
    <property type="entry name" value="ProRS_core_prok"/>
    <property type="match status" value="1"/>
</dbReference>
<dbReference type="FunFam" id="3.30.930.10:FF:000167">
    <property type="entry name" value="Proline--tRNA ligase"/>
    <property type="match status" value="1"/>
</dbReference>
<dbReference type="FunFam" id="3.40.50.800:FF:000011">
    <property type="entry name" value="Proline--tRNA ligase"/>
    <property type="match status" value="1"/>
</dbReference>
<dbReference type="Gene3D" id="3.40.50.800">
    <property type="entry name" value="Anticodon-binding domain"/>
    <property type="match status" value="1"/>
</dbReference>
<dbReference type="Gene3D" id="3.30.930.10">
    <property type="entry name" value="Bira Bifunctional Protein, Domain 2"/>
    <property type="match status" value="2"/>
</dbReference>
<dbReference type="Gene3D" id="3.90.960.10">
    <property type="entry name" value="YbaK/aminoacyl-tRNA synthetase-associated domain"/>
    <property type="match status" value="1"/>
</dbReference>
<dbReference type="HAMAP" id="MF_01569">
    <property type="entry name" value="Pro_tRNA_synth_type1"/>
    <property type="match status" value="1"/>
</dbReference>
<dbReference type="InterPro" id="IPR002314">
    <property type="entry name" value="aa-tRNA-synt_IIb"/>
</dbReference>
<dbReference type="InterPro" id="IPR006195">
    <property type="entry name" value="aa-tRNA-synth_II"/>
</dbReference>
<dbReference type="InterPro" id="IPR045864">
    <property type="entry name" value="aa-tRNA-synth_II/BPL/LPL"/>
</dbReference>
<dbReference type="InterPro" id="IPR004154">
    <property type="entry name" value="Anticodon-bd"/>
</dbReference>
<dbReference type="InterPro" id="IPR036621">
    <property type="entry name" value="Anticodon-bd_dom_sf"/>
</dbReference>
<dbReference type="InterPro" id="IPR002316">
    <property type="entry name" value="Pro-tRNA-ligase_IIa"/>
</dbReference>
<dbReference type="InterPro" id="IPR004500">
    <property type="entry name" value="Pro-tRNA-synth_IIa_bac-type"/>
</dbReference>
<dbReference type="InterPro" id="IPR023717">
    <property type="entry name" value="Pro-tRNA-Synthase_IIa_type1"/>
</dbReference>
<dbReference type="InterPro" id="IPR050062">
    <property type="entry name" value="Pro-tRNA_synthetase"/>
</dbReference>
<dbReference type="InterPro" id="IPR044140">
    <property type="entry name" value="ProRS_anticodon_short"/>
</dbReference>
<dbReference type="InterPro" id="IPR033730">
    <property type="entry name" value="ProRS_core_prok"/>
</dbReference>
<dbReference type="InterPro" id="IPR036754">
    <property type="entry name" value="YbaK/aa-tRNA-synt-asso_dom_sf"/>
</dbReference>
<dbReference type="InterPro" id="IPR007214">
    <property type="entry name" value="YbaK/aa-tRNA-synth-assoc-dom"/>
</dbReference>
<dbReference type="NCBIfam" id="NF006625">
    <property type="entry name" value="PRK09194.1"/>
    <property type="match status" value="1"/>
</dbReference>
<dbReference type="NCBIfam" id="TIGR00409">
    <property type="entry name" value="proS_fam_II"/>
    <property type="match status" value="1"/>
</dbReference>
<dbReference type="PANTHER" id="PTHR42753">
    <property type="entry name" value="MITOCHONDRIAL RIBOSOME PROTEIN L39/PROLYL-TRNA LIGASE FAMILY MEMBER"/>
    <property type="match status" value="1"/>
</dbReference>
<dbReference type="PANTHER" id="PTHR42753:SF2">
    <property type="entry name" value="PROLINE--TRNA LIGASE"/>
    <property type="match status" value="1"/>
</dbReference>
<dbReference type="Pfam" id="PF03129">
    <property type="entry name" value="HGTP_anticodon"/>
    <property type="match status" value="1"/>
</dbReference>
<dbReference type="Pfam" id="PF00587">
    <property type="entry name" value="tRNA-synt_2b"/>
    <property type="match status" value="1"/>
</dbReference>
<dbReference type="Pfam" id="PF04073">
    <property type="entry name" value="tRNA_edit"/>
    <property type="match status" value="1"/>
</dbReference>
<dbReference type="PRINTS" id="PR01046">
    <property type="entry name" value="TRNASYNTHPRO"/>
</dbReference>
<dbReference type="SUPFAM" id="SSF52954">
    <property type="entry name" value="Class II aaRS ABD-related"/>
    <property type="match status" value="1"/>
</dbReference>
<dbReference type="SUPFAM" id="SSF55681">
    <property type="entry name" value="Class II aaRS and biotin synthetases"/>
    <property type="match status" value="1"/>
</dbReference>
<dbReference type="SUPFAM" id="SSF55826">
    <property type="entry name" value="YbaK/ProRS associated domain"/>
    <property type="match status" value="1"/>
</dbReference>
<dbReference type="PROSITE" id="PS50862">
    <property type="entry name" value="AA_TRNA_LIGASE_II"/>
    <property type="match status" value="1"/>
</dbReference>
<name>SYP_GLOVI</name>
<proteinExistence type="inferred from homology"/>
<protein>
    <recommendedName>
        <fullName evidence="1">Proline--tRNA ligase</fullName>
        <ecNumber evidence="1">6.1.1.15</ecNumber>
    </recommendedName>
    <alternativeName>
        <fullName evidence="1">Prolyl-tRNA synthetase</fullName>
        <shortName evidence="1">ProRS</shortName>
    </alternativeName>
</protein>
<feature type="chain" id="PRO_0000248699" description="Proline--tRNA ligase">
    <location>
        <begin position="1"/>
        <end position="589"/>
    </location>
</feature>
<reference key="1">
    <citation type="journal article" date="2003" name="DNA Res.">
        <title>Complete genome structure of Gloeobacter violaceus PCC 7421, a cyanobacterium that lacks thylakoids.</title>
        <authorList>
            <person name="Nakamura Y."/>
            <person name="Kaneko T."/>
            <person name="Sato S."/>
            <person name="Mimuro M."/>
            <person name="Miyashita H."/>
            <person name="Tsuchiya T."/>
            <person name="Sasamoto S."/>
            <person name="Watanabe A."/>
            <person name="Kawashima K."/>
            <person name="Kishida Y."/>
            <person name="Kiyokawa C."/>
            <person name="Kohara M."/>
            <person name="Matsumoto M."/>
            <person name="Matsuno A."/>
            <person name="Nakazaki N."/>
            <person name="Shimpo S."/>
            <person name="Takeuchi C."/>
            <person name="Yamada M."/>
            <person name="Tabata S."/>
        </authorList>
    </citation>
    <scope>NUCLEOTIDE SEQUENCE [LARGE SCALE GENOMIC DNA]</scope>
    <source>
        <strain>ATCC 29082 / PCC 7421</strain>
    </source>
</reference>
<accession>Q7NHL0</accession>
<organism>
    <name type="scientific">Gloeobacter violaceus (strain ATCC 29082 / PCC 7421)</name>
    <dbReference type="NCBI Taxonomy" id="251221"/>
    <lineage>
        <taxon>Bacteria</taxon>
        <taxon>Bacillati</taxon>
        <taxon>Cyanobacteriota</taxon>
        <taxon>Cyanophyceae</taxon>
        <taxon>Gloeobacterales</taxon>
        <taxon>Gloeobacteraceae</taxon>
        <taxon>Gloeobacter</taxon>
    </lineage>
</organism>
<keyword id="KW-0030">Aminoacyl-tRNA synthetase</keyword>
<keyword id="KW-0067">ATP-binding</keyword>
<keyword id="KW-0963">Cytoplasm</keyword>
<keyword id="KW-0436">Ligase</keyword>
<keyword id="KW-0547">Nucleotide-binding</keyword>
<keyword id="KW-0648">Protein biosynthesis</keyword>
<keyword id="KW-1185">Reference proteome</keyword>